<sequence length="127" mass="14489">MMSSDQQFFLKWNDFQTNMVTSFRHLRDEKSFTDVTLACEGQTCKAHKMVLSACSPYFKALLEENPSKHPIIILKDVSYIHLQAILEFMYAGEVNVSQEQLPAFLKTADRLKVKGLAETPSSIKREG</sequence>
<accession>Q7KRI2</accession>
<accession>A4UZN1</accession>
<accession>B7YZR8</accession>
<accession>C7LAH2</accession>
<keyword id="KW-0010">Activator</keyword>
<keyword id="KW-0156">Chromatin regulator</keyword>
<keyword id="KW-0217">Developmental protein</keyword>
<keyword id="KW-0238">DNA-binding</keyword>
<keyword id="KW-0539">Nucleus</keyword>
<keyword id="KW-1185">Reference proteome</keyword>
<keyword id="KW-0678">Repressor</keyword>
<keyword id="KW-0804">Transcription</keyword>
<keyword id="KW-0805">Transcription regulation</keyword>
<name>LOLAL_DROME</name>
<proteinExistence type="evidence at protein level"/>
<evidence type="ECO:0000255" key="1">
    <source>
        <dbReference type="PROSITE-ProRule" id="PRU00037"/>
    </source>
</evidence>
<evidence type="ECO:0000269" key="2">
    <source>
    </source>
</evidence>
<evidence type="ECO:0000269" key="3">
    <source>
    </source>
</evidence>
<evidence type="ECO:0000269" key="4">
    <source>
    </source>
</evidence>
<evidence type="ECO:0000269" key="5">
    <source>
    </source>
</evidence>
<evidence type="ECO:0000303" key="6">
    <source>
    </source>
</evidence>
<evidence type="ECO:0000305" key="7"/>
<evidence type="ECO:0000312" key="8">
    <source>
        <dbReference type="EMBL" id="AAG45054.1"/>
    </source>
</evidence>
<evidence type="ECO:0000312" key="9">
    <source>
        <dbReference type="EMBL" id="AAL25403.1"/>
    </source>
</evidence>
<evidence type="ECO:0000312" key="10">
    <source>
        <dbReference type="EMBL" id="AAM68179.1"/>
    </source>
</evidence>
<dbReference type="EMBL" id="AF308476">
    <property type="protein sequence ID" value="AAG45054.1"/>
    <property type="molecule type" value="mRNA"/>
</dbReference>
<dbReference type="EMBL" id="AE013599">
    <property type="protein sequence ID" value="AAF57739.1"/>
    <property type="molecule type" value="Genomic_DNA"/>
</dbReference>
<dbReference type="EMBL" id="AE013599">
    <property type="protein sequence ID" value="AAM68179.1"/>
    <property type="molecule type" value="Genomic_DNA"/>
</dbReference>
<dbReference type="EMBL" id="AE013599">
    <property type="protein sequence ID" value="AAM68180.1"/>
    <property type="molecule type" value="Genomic_DNA"/>
</dbReference>
<dbReference type="EMBL" id="AE013599">
    <property type="protein sequence ID" value="AAM68181.1"/>
    <property type="molecule type" value="Genomic_DNA"/>
</dbReference>
<dbReference type="EMBL" id="AY060364">
    <property type="protein sequence ID" value="AAL25403.1"/>
    <property type="molecule type" value="mRNA"/>
</dbReference>
<dbReference type="EMBL" id="BT099722">
    <property type="protein sequence ID" value="ACV53086.1"/>
    <property type="molecule type" value="mRNA"/>
</dbReference>
<dbReference type="RefSeq" id="NP_001163186.1">
    <property type="nucleotide sequence ID" value="NM_001169715.2"/>
</dbReference>
<dbReference type="RefSeq" id="NP_001246402.1">
    <property type="nucleotide sequence ID" value="NM_001259473.2"/>
</dbReference>
<dbReference type="RefSeq" id="NP_001246403.1">
    <property type="nucleotide sequence ID" value="NM_001259474.2"/>
</dbReference>
<dbReference type="RefSeq" id="NP_001286564.1">
    <property type="nucleotide sequence ID" value="NM_001299635.1"/>
</dbReference>
<dbReference type="RefSeq" id="NP_524778.1">
    <property type="nucleotide sequence ID" value="NM_080039.4"/>
</dbReference>
<dbReference type="RefSeq" id="NP_725756.1">
    <property type="nucleotide sequence ID" value="NM_166270.2"/>
</dbReference>
<dbReference type="RefSeq" id="NP_725757.1">
    <property type="nucleotide sequence ID" value="NM_166271.3"/>
</dbReference>
<dbReference type="RefSeq" id="NP_725758.1">
    <property type="nucleotide sequence ID" value="NM_166272.3"/>
</dbReference>
<dbReference type="SMR" id="Q7KRI2"/>
<dbReference type="BioGRID" id="69215">
    <property type="interactions" value="23"/>
</dbReference>
<dbReference type="FunCoup" id="Q7KRI2">
    <property type="interactions" value="471"/>
</dbReference>
<dbReference type="IntAct" id="Q7KRI2">
    <property type="interactions" value="17"/>
</dbReference>
<dbReference type="STRING" id="7227.FBpp0085956"/>
<dbReference type="PaxDb" id="7227-FBpp0085955"/>
<dbReference type="EnsemblMetazoa" id="FBtr0086776">
    <property type="protein sequence ID" value="FBpp0085955"/>
    <property type="gene ID" value="FBgn0022238"/>
</dbReference>
<dbReference type="EnsemblMetazoa" id="FBtr0086777">
    <property type="protein sequence ID" value="FBpp0085956"/>
    <property type="gene ID" value="FBgn0022238"/>
</dbReference>
<dbReference type="EnsemblMetazoa" id="FBtr0086778">
    <property type="protein sequence ID" value="FBpp0085957"/>
    <property type="gene ID" value="FBgn0022238"/>
</dbReference>
<dbReference type="EnsemblMetazoa" id="FBtr0086779">
    <property type="protein sequence ID" value="FBpp0085958"/>
    <property type="gene ID" value="FBgn0022238"/>
</dbReference>
<dbReference type="EnsemblMetazoa" id="FBtr0300483">
    <property type="protein sequence ID" value="FBpp0289710"/>
    <property type="gene ID" value="FBgn0022238"/>
</dbReference>
<dbReference type="EnsemblMetazoa" id="FBtr0300484">
    <property type="protein sequence ID" value="FBpp0289711"/>
    <property type="gene ID" value="FBgn0022238"/>
</dbReference>
<dbReference type="EnsemblMetazoa" id="FBtr0305270">
    <property type="protein sequence ID" value="FBpp0293794"/>
    <property type="gene ID" value="FBgn0022238"/>
</dbReference>
<dbReference type="EnsemblMetazoa" id="FBtr0345357">
    <property type="protein sequence ID" value="FBpp0311512"/>
    <property type="gene ID" value="FBgn0022238"/>
</dbReference>
<dbReference type="GeneID" id="44703"/>
<dbReference type="KEGG" id="dme:Dmel_CG5738"/>
<dbReference type="AGR" id="FB:FBgn0022238"/>
<dbReference type="CTD" id="44703"/>
<dbReference type="FlyBase" id="FBgn0022238">
    <property type="gene designation" value="lolal"/>
</dbReference>
<dbReference type="VEuPathDB" id="VectorBase:FBgn0022238"/>
<dbReference type="eggNOG" id="ENOG502RY9Q">
    <property type="taxonomic scope" value="Eukaryota"/>
</dbReference>
<dbReference type="GeneTree" id="ENSGT00530000064321"/>
<dbReference type="HOGENOM" id="CLU_004253_8_1_1"/>
<dbReference type="InParanoid" id="Q7KRI2"/>
<dbReference type="OMA" id="HDISYMA"/>
<dbReference type="OrthoDB" id="10261408at2759"/>
<dbReference type="PhylomeDB" id="Q7KRI2"/>
<dbReference type="BioGRID-ORCS" id="44703">
    <property type="hits" value="0 hits in 1 CRISPR screen"/>
</dbReference>
<dbReference type="ChiTaRS" id="lolal">
    <property type="organism name" value="fly"/>
</dbReference>
<dbReference type="GenomeRNAi" id="44703"/>
<dbReference type="PRO" id="PR:Q7KRI2"/>
<dbReference type="Proteomes" id="UP000000803">
    <property type="component" value="Chromosome 2R"/>
</dbReference>
<dbReference type="Bgee" id="FBgn0022238">
    <property type="expression patterns" value="Expressed in polar follicle cell (Drosophila) in post-embryonic organism and 296 other cell types or tissues"/>
</dbReference>
<dbReference type="ExpressionAtlas" id="Q7KRI2">
    <property type="expression patterns" value="baseline and differential"/>
</dbReference>
<dbReference type="GO" id="GO:0000794">
    <property type="term" value="C:condensed nuclear chromosome"/>
    <property type="evidence" value="ECO:0000314"/>
    <property type="project" value="UniProtKB"/>
</dbReference>
<dbReference type="GO" id="GO:0005634">
    <property type="term" value="C:nucleus"/>
    <property type="evidence" value="ECO:0000314"/>
    <property type="project" value="UniProtKB"/>
</dbReference>
<dbReference type="GO" id="GO:0031519">
    <property type="term" value="C:PcG protein complex"/>
    <property type="evidence" value="ECO:0000353"/>
    <property type="project" value="UniProtKB"/>
</dbReference>
<dbReference type="GO" id="GO:0005700">
    <property type="term" value="C:polytene chromosome"/>
    <property type="evidence" value="ECO:0000314"/>
    <property type="project" value="UniProtKB"/>
</dbReference>
<dbReference type="GO" id="GO:0003677">
    <property type="term" value="F:DNA binding"/>
    <property type="evidence" value="ECO:0000314"/>
    <property type="project" value="FlyBase"/>
</dbReference>
<dbReference type="GO" id="GO:0031208">
    <property type="term" value="F:POZ domain binding"/>
    <property type="evidence" value="ECO:0000314"/>
    <property type="project" value="FlyBase"/>
</dbReference>
<dbReference type="GO" id="GO:0042803">
    <property type="term" value="F:protein homodimerization activity"/>
    <property type="evidence" value="ECO:0000314"/>
    <property type="project" value="FlyBase"/>
</dbReference>
<dbReference type="GO" id="GO:0009953">
    <property type="term" value="P:dorsal/ventral pattern formation"/>
    <property type="evidence" value="ECO:0000315"/>
    <property type="project" value="FlyBase"/>
</dbReference>
<dbReference type="GO" id="GO:0001700">
    <property type="term" value="P:embryonic development via the syncytial blastoderm"/>
    <property type="evidence" value="ECO:0000315"/>
    <property type="project" value="UniProtKB"/>
</dbReference>
<dbReference type="GO" id="GO:0031507">
    <property type="term" value="P:heterochromatin formation"/>
    <property type="evidence" value="ECO:0000315"/>
    <property type="project" value="FlyBase"/>
</dbReference>
<dbReference type="GO" id="GO:0035167">
    <property type="term" value="P:larval lymph gland hemopoiesis"/>
    <property type="evidence" value="ECO:0000315"/>
    <property type="project" value="FlyBase"/>
</dbReference>
<dbReference type="GO" id="GO:0045892">
    <property type="term" value="P:negative regulation of DNA-templated transcription"/>
    <property type="evidence" value="ECO:0000315"/>
    <property type="project" value="UniProtKB"/>
</dbReference>
<dbReference type="GO" id="GO:0045893">
    <property type="term" value="P:positive regulation of DNA-templated transcription"/>
    <property type="evidence" value="ECO:0000316"/>
    <property type="project" value="UniProtKB"/>
</dbReference>
<dbReference type="GO" id="GO:0045944">
    <property type="term" value="P:positive regulation of transcription by RNA polymerase II"/>
    <property type="evidence" value="ECO:0000315"/>
    <property type="project" value="FlyBase"/>
</dbReference>
<dbReference type="GO" id="GO:0007435">
    <property type="term" value="P:salivary gland morphogenesis"/>
    <property type="evidence" value="ECO:0000315"/>
    <property type="project" value="FlyBase"/>
</dbReference>
<dbReference type="GO" id="GO:0007426">
    <property type="term" value="P:tracheal outgrowth, open tracheal system"/>
    <property type="evidence" value="ECO:0000315"/>
    <property type="project" value="FlyBase"/>
</dbReference>
<dbReference type="CDD" id="cd18315">
    <property type="entry name" value="BTB_POZ_BAB-like"/>
    <property type="match status" value="1"/>
</dbReference>
<dbReference type="FunFam" id="3.30.710.10:FF:000052">
    <property type="entry name" value="Longitudinals lacking protein-like"/>
    <property type="match status" value="1"/>
</dbReference>
<dbReference type="Gene3D" id="3.30.710.10">
    <property type="entry name" value="Potassium Channel Kv1.1, Chain A"/>
    <property type="match status" value="1"/>
</dbReference>
<dbReference type="InterPro" id="IPR000210">
    <property type="entry name" value="BTB/POZ_dom"/>
</dbReference>
<dbReference type="InterPro" id="IPR051095">
    <property type="entry name" value="Dros_DevTransReg"/>
</dbReference>
<dbReference type="InterPro" id="IPR011333">
    <property type="entry name" value="SKP1/BTB/POZ_sf"/>
</dbReference>
<dbReference type="PANTHER" id="PTHR23110">
    <property type="entry name" value="BTB DOMAIN TRANSCRIPTION FACTOR"/>
    <property type="match status" value="1"/>
</dbReference>
<dbReference type="PANTHER" id="PTHR23110:SF98">
    <property type="entry name" value="PRE-LOLA-G, ISOFORM C-RELATED"/>
    <property type="match status" value="1"/>
</dbReference>
<dbReference type="Pfam" id="PF00651">
    <property type="entry name" value="BTB"/>
    <property type="match status" value="1"/>
</dbReference>
<dbReference type="SMART" id="SM00225">
    <property type="entry name" value="BTB"/>
    <property type="match status" value="1"/>
</dbReference>
<dbReference type="SUPFAM" id="SSF54695">
    <property type="entry name" value="POZ domain"/>
    <property type="match status" value="1"/>
</dbReference>
<dbReference type="PROSITE" id="PS50097">
    <property type="entry name" value="BTB"/>
    <property type="match status" value="1"/>
</dbReference>
<gene>
    <name evidence="10" type="primary">lolal</name>
    <name evidence="6" type="synonym">ban</name>
    <name type="ORF">CG5738</name>
</gene>
<reference evidence="8" key="1">
    <citation type="journal article" date="2001" name="Mol. Genet. Genomics">
        <title>Advantages of a P-element construct containing MtnA sequences for the identification of patterning and cell determination genes in Drosophila melanogaster.</title>
        <authorList>
            <person name="Faucheux M."/>
            <person name="Netter S."/>
            <person name="Bloyer S."/>
            <person name="Moussa M."/>
            <person name="Boissonneau E."/>
            <person name="Lemeunier F."/>
            <person name="Wegnez M."/>
            <person name="Theodore L."/>
        </authorList>
    </citation>
    <scope>NUCLEOTIDE SEQUENCE [MRNA]</scope>
</reference>
<reference evidence="10" key="2">
    <citation type="journal article" date="2000" name="Science">
        <title>The genome sequence of Drosophila melanogaster.</title>
        <authorList>
            <person name="Adams M.D."/>
            <person name="Celniker S.E."/>
            <person name="Holt R.A."/>
            <person name="Evans C.A."/>
            <person name="Gocayne J.D."/>
            <person name="Amanatides P.G."/>
            <person name="Scherer S.E."/>
            <person name="Li P.W."/>
            <person name="Hoskins R.A."/>
            <person name="Galle R.F."/>
            <person name="George R.A."/>
            <person name="Lewis S.E."/>
            <person name="Richards S."/>
            <person name="Ashburner M."/>
            <person name="Henderson S.N."/>
            <person name="Sutton G.G."/>
            <person name="Wortman J.R."/>
            <person name="Yandell M.D."/>
            <person name="Zhang Q."/>
            <person name="Chen L.X."/>
            <person name="Brandon R.C."/>
            <person name="Rogers Y.-H.C."/>
            <person name="Blazej R.G."/>
            <person name="Champe M."/>
            <person name="Pfeiffer B.D."/>
            <person name="Wan K.H."/>
            <person name="Doyle C."/>
            <person name="Baxter E.G."/>
            <person name="Helt G."/>
            <person name="Nelson C.R."/>
            <person name="Miklos G.L.G."/>
            <person name="Abril J.F."/>
            <person name="Agbayani A."/>
            <person name="An H.-J."/>
            <person name="Andrews-Pfannkoch C."/>
            <person name="Baldwin D."/>
            <person name="Ballew R.M."/>
            <person name="Basu A."/>
            <person name="Baxendale J."/>
            <person name="Bayraktaroglu L."/>
            <person name="Beasley E.M."/>
            <person name="Beeson K.Y."/>
            <person name="Benos P.V."/>
            <person name="Berman B.P."/>
            <person name="Bhandari D."/>
            <person name="Bolshakov S."/>
            <person name="Borkova D."/>
            <person name="Botchan M.R."/>
            <person name="Bouck J."/>
            <person name="Brokstein P."/>
            <person name="Brottier P."/>
            <person name="Burtis K.C."/>
            <person name="Busam D.A."/>
            <person name="Butler H."/>
            <person name="Cadieu E."/>
            <person name="Center A."/>
            <person name="Chandra I."/>
            <person name="Cherry J.M."/>
            <person name="Cawley S."/>
            <person name="Dahlke C."/>
            <person name="Davenport L.B."/>
            <person name="Davies P."/>
            <person name="de Pablos B."/>
            <person name="Delcher A."/>
            <person name="Deng Z."/>
            <person name="Mays A.D."/>
            <person name="Dew I."/>
            <person name="Dietz S.M."/>
            <person name="Dodson K."/>
            <person name="Doup L.E."/>
            <person name="Downes M."/>
            <person name="Dugan-Rocha S."/>
            <person name="Dunkov B.C."/>
            <person name="Dunn P."/>
            <person name="Durbin K.J."/>
            <person name="Evangelista C.C."/>
            <person name="Ferraz C."/>
            <person name="Ferriera S."/>
            <person name="Fleischmann W."/>
            <person name="Fosler C."/>
            <person name="Gabrielian A.E."/>
            <person name="Garg N.S."/>
            <person name="Gelbart W.M."/>
            <person name="Glasser K."/>
            <person name="Glodek A."/>
            <person name="Gong F."/>
            <person name="Gorrell J.H."/>
            <person name="Gu Z."/>
            <person name="Guan P."/>
            <person name="Harris M."/>
            <person name="Harris N.L."/>
            <person name="Harvey D.A."/>
            <person name="Heiman T.J."/>
            <person name="Hernandez J.R."/>
            <person name="Houck J."/>
            <person name="Hostin D."/>
            <person name="Houston K.A."/>
            <person name="Howland T.J."/>
            <person name="Wei M.-H."/>
            <person name="Ibegwam C."/>
            <person name="Jalali M."/>
            <person name="Kalush F."/>
            <person name="Karpen G.H."/>
            <person name="Ke Z."/>
            <person name="Kennison J.A."/>
            <person name="Ketchum K.A."/>
            <person name="Kimmel B.E."/>
            <person name="Kodira C.D."/>
            <person name="Kraft C.L."/>
            <person name="Kravitz S."/>
            <person name="Kulp D."/>
            <person name="Lai Z."/>
            <person name="Lasko P."/>
            <person name="Lei Y."/>
            <person name="Levitsky A.A."/>
            <person name="Li J.H."/>
            <person name="Li Z."/>
            <person name="Liang Y."/>
            <person name="Lin X."/>
            <person name="Liu X."/>
            <person name="Mattei B."/>
            <person name="McIntosh T.C."/>
            <person name="McLeod M.P."/>
            <person name="McPherson D."/>
            <person name="Merkulov G."/>
            <person name="Milshina N.V."/>
            <person name="Mobarry C."/>
            <person name="Morris J."/>
            <person name="Moshrefi A."/>
            <person name="Mount S.M."/>
            <person name="Moy M."/>
            <person name="Murphy B."/>
            <person name="Murphy L."/>
            <person name="Muzny D.M."/>
            <person name="Nelson D.L."/>
            <person name="Nelson D.R."/>
            <person name="Nelson K.A."/>
            <person name="Nixon K."/>
            <person name="Nusskern D.R."/>
            <person name="Pacleb J.M."/>
            <person name="Palazzolo M."/>
            <person name="Pittman G.S."/>
            <person name="Pan S."/>
            <person name="Pollard J."/>
            <person name="Puri V."/>
            <person name="Reese M.G."/>
            <person name="Reinert K."/>
            <person name="Remington K."/>
            <person name="Saunders R.D.C."/>
            <person name="Scheeler F."/>
            <person name="Shen H."/>
            <person name="Shue B.C."/>
            <person name="Siden-Kiamos I."/>
            <person name="Simpson M."/>
            <person name="Skupski M.P."/>
            <person name="Smith T.J."/>
            <person name="Spier E."/>
            <person name="Spradling A.C."/>
            <person name="Stapleton M."/>
            <person name="Strong R."/>
            <person name="Sun E."/>
            <person name="Svirskas R."/>
            <person name="Tector C."/>
            <person name="Turner R."/>
            <person name="Venter E."/>
            <person name="Wang A.H."/>
            <person name="Wang X."/>
            <person name="Wang Z.-Y."/>
            <person name="Wassarman D.A."/>
            <person name="Weinstock G.M."/>
            <person name="Weissenbach J."/>
            <person name="Williams S.M."/>
            <person name="Woodage T."/>
            <person name="Worley K.C."/>
            <person name="Wu D."/>
            <person name="Yang S."/>
            <person name="Yao Q.A."/>
            <person name="Ye J."/>
            <person name="Yeh R.-F."/>
            <person name="Zaveri J.S."/>
            <person name="Zhan M."/>
            <person name="Zhang G."/>
            <person name="Zhao Q."/>
            <person name="Zheng L."/>
            <person name="Zheng X.H."/>
            <person name="Zhong F.N."/>
            <person name="Zhong W."/>
            <person name="Zhou X."/>
            <person name="Zhu S.C."/>
            <person name="Zhu X."/>
            <person name="Smith H.O."/>
            <person name="Gibbs R.A."/>
            <person name="Myers E.W."/>
            <person name="Rubin G.M."/>
            <person name="Venter J.C."/>
        </authorList>
    </citation>
    <scope>NUCLEOTIDE SEQUENCE [LARGE SCALE GENOMIC DNA]</scope>
    <source>
        <strain evidence="2">Berkeley</strain>
    </source>
</reference>
<reference evidence="7 10" key="3">
    <citation type="journal article" date="2002" name="Genome Biol.">
        <title>Annotation of the Drosophila melanogaster euchromatic genome: a systematic review.</title>
        <authorList>
            <person name="Misra S."/>
            <person name="Crosby M.A."/>
            <person name="Mungall C.J."/>
            <person name="Matthews B.B."/>
            <person name="Campbell K.S."/>
            <person name="Hradecky P."/>
            <person name="Huang Y."/>
            <person name="Kaminker J.S."/>
            <person name="Millburn G.H."/>
            <person name="Prochnik S.E."/>
            <person name="Smith C.D."/>
            <person name="Tupy J.L."/>
            <person name="Whitfield E.J."/>
            <person name="Bayraktaroglu L."/>
            <person name="Berman B.P."/>
            <person name="Bettencourt B.R."/>
            <person name="Celniker S.E."/>
            <person name="de Grey A.D.N.J."/>
            <person name="Drysdale R.A."/>
            <person name="Harris N.L."/>
            <person name="Richter J."/>
            <person name="Russo S."/>
            <person name="Schroeder A.J."/>
            <person name="Shu S.Q."/>
            <person name="Stapleton M."/>
            <person name="Yamada C."/>
            <person name="Ashburner M."/>
            <person name="Gelbart W.M."/>
            <person name="Rubin G.M."/>
            <person name="Lewis S.E."/>
        </authorList>
    </citation>
    <scope>GENOME REANNOTATION</scope>
    <source>
        <strain>Berkeley</strain>
    </source>
</reference>
<reference evidence="9" key="4">
    <citation type="journal article" date="2002" name="Genome Biol.">
        <title>A Drosophila full-length cDNA resource.</title>
        <authorList>
            <person name="Stapleton M."/>
            <person name="Carlson J.W."/>
            <person name="Brokstein P."/>
            <person name="Yu C."/>
            <person name="Champe M."/>
            <person name="George R.A."/>
            <person name="Guarin H."/>
            <person name="Kronmiller B."/>
            <person name="Pacleb J.M."/>
            <person name="Park S."/>
            <person name="Wan K.H."/>
            <person name="Rubin G.M."/>
            <person name="Celniker S.E."/>
        </authorList>
    </citation>
    <scope>NUCLEOTIDE SEQUENCE [LARGE SCALE MRNA]</scope>
    <source>
        <strain evidence="9">Berkeley</strain>
        <tissue evidence="3">Embryo</tissue>
    </source>
</reference>
<reference key="5">
    <citation type="submission" date="2009-09" db="EMBL/GenBank/DDBJ databases">
        <authorList>
            <person name="Carlson J.W."/>
            <person name="Booth B."/>
            <person name="Frise E."/>
            <person name="Sandler J."/>
            <person name="Wan K.H."/>
            <person name="Yu C."/>
            <person name="Celniker S.E."/>
        </authorList>
    </citation>
    <scope>NUCLEOTIDE SEQUENCE [LARGE SCALE MRNA]</scope>
    <source>
        <strain>Berkeley</strain>
    </source>
</reference>
<reference evidence="7" key="6">
    <citation type="journal article" date="2003" name="Mech. Dev.">
        <title>Trl-GAGA directly interacts with lola like and both are part of the repressive complex of Polycomb group of genes.</title>
        <authorList>
            <person name="Mishra K."/>
            <person name="Chopra V.S."/>
            <person name="Srinivasan A."/>
            <person name="Mishra R.K."/>
        </authorList>
    </citation>
    <scope>FUNCTION</scope>
    <scope>INTERACTION WITH TRL</scope>
    <scope>IDENTIFICATION IN A COMPLEX WITH PC</scope>
</reference>
<reference evidence="7" key="7">
    <citation type="journal article" date="2003" name="Mol. Cell. Biol.">
        <title>Batman interacts with polycomb and trithorax group genes and encodes a BTB/POZ protein that is included in a complex containing GAGA factor.</title>
        <authorList>
            <person name="Faucheux M."/>
            <person name="Roignant J.-Y."/>
            <person name="Netter S."/>
            <person name="Charollais J."/>
            <person name="Antoniewski C."/>
            <person name="Theodore L."/>
        </authorList>
    </citation>
    <scope>FUNCTION</scope>
    <scope>INTERACTION WITH TRL</scope>
    <scope>SUBCELLULAR LOCATION</scope>
</reference>
<protein>
    <recommendedName>
        <fullName>Longitudinals lacking protein-like</fullName>
        <shortName>Lola-like protein</shortName>
    </recommendedName>
    <alternativeName>
        <fullName>Protein Batman</fullName>
    </alternativeName>
</protein>
<organism>
    <name type="scientific">Drosophila melanogaster</name>
    <name type="common">Fruit fly</name>
    <dbReference type="NCBI Taxonomy" id="7227"/>
    <lineage>
        <taxon>Eukaryota</taxon>
        <taxon>Metazoa</taxon>
        <taxon>Ecdysozoa</taxon>
        <taxon>Arthropoda</taxon>
        <taxon>Hexapoda</taxon>
        <taxon>Insecta</taxon>
        <taxon>Pterygota</taxon>
        <taxon>Neoptera</taxon>
        <taxon>Endopterygota</taxon>
        <taxon>Diptera</taxon>
        <taxon>Brachycera</taxon>
        <taxon>Muscomorpha</taxon>
        <taxon>Ephydroidea</taxon>
        <taxon>Drosophilidae</taxon>
        <taxon>Drosophila</taxon>
        <taxon>Sophophora</taxon>
    </lineage>
</organism>
<feature type="chain" id="PRO_0000186221" description="Longitudinals lacking protein-like">
    <location>
        <begin position="1"/>
        <end position="127"/>
    </location>
</feature>
<feature type="domain" description="BTB" evidence="1">
    <location>
        <begin position="33"/>
        <end position="98"/>
    </location>
</feature>
<comment type="function">
    <text evidence="4 5">Required, together with Trl, for maintaining the repressed state of target genes including homeotic genes Scr and Ubx. May also be involved in the activation of homeotic genes. Binds to a DNA Polycomb response element (PRE) at the bithorax complex. Also binds to polytene chromosomes at several hundred sites, many of which are shared with Trl and ph-p. Required during embryonic development.</text>
</comment>
<comment type="subunit">
    <text evidence="4 5">The BTB domain interacts with the BTB domain of Trl in vitro. Found in a Pc-containing complex.</text>
</comment>
<comment type="interaction">
    <interactant intactId="EBI-84493">
        <id>Q7KRI2</id>
    </interactant>
    <interactant intactId="EBI-193057">
        <id>O77459</id>
        <label>ken</label>
    </interactant>
    <organismsDiffer>false</organismsDiffer>
    <experiments>2</experiments>
</comment>
<comment type="interaction">
    <interactant intactId="EBI-84493">
        <id>Q7KRI2</id>
    </interactant>
    <interactant intactId="EBI-134581">
        <id>Q7KF43</id>
        <label>rib</label>
    </interactant>
    <organismsDiffer>false</organismsDiffer>
    <experiments>2</experiments>
</comment>
<comment type="interaction">
    <interactant intactId="EBI-84493">
        <id>Q7KRI2</id>
    </interactant>
    <interactant intactId="EBI-300317">
        <id>Q08605</id>
        <label>Trl</label>
    </interactant>
    <organismsDiffer>false</organismsDiffer>
    <experiments>7</experiments>
</comment>
<comment type="subcellular location">
    <subcellularLocation>
        <location evidence="4">Nucleus</location>
    </subcellularLocation>
</comment>